<evidence type="ECO:0000255" key="1">
    <source>
        <dbReference type="HAMAP-Rule" id="MF_01687"/>
    </source>
</evidence>
<proteinExistence type="inferred from homology"/>
<reference key="1">
    <citation type="journal article" date="2008" name="Environ. Microbiol.">
        <title>The genome of Erwinia tasmaniensis strain Et1/99, a non-pathogenic bacterium in the genus Erwinia.</title>
        <authorList>
            <person name="Kube M."/>
            <person name="Migdoll A.M."/>
            <person name="Mueller I."/>
            <person name="Kuhl H."/>
            <person name="Beck A."/>
            <person name="Reinhardt R."/>
            <person name="Geider K."/>
        </authorList>
    </citation>
    <scope>NUCLEOTIDE SEQUENCE [LARGE SCALE GENOMIC DNA]</scope>
    <source>
        <strain>DSM 17950 / CFBP 7177 / CIP 109463 / NCPPB 4357 / Et1/99</strain>
    </source>
</reference>
<comment type="catalytic activity">
    <reaction evidence="1">
        <text>Hydrolysis of terminal non-reducing beta-D-galactose residues in beta-D-galactosides.</text>
        <dbReference type="EC" id="3.2.1.23"/>
    </reaction>
</comment>
<comment type="cofactor">
    <cofactor evidence="1">
        <name>Mg(2+)</name>
        <dbReference type="ChEBI" id="CHEBI:18420"/>
    </cofactor>
    <text evidence="1">Binds 2 magnesium ions per monomer.</text>
</comment>
<comment type="cofactor">
    <cofactor evidence="1">
        <name>Na(+)</name>
        <dbReference type="ChEBI" id="CHEBI:29101"/>
    </cofactor>
    <text evidence="1">Binds 1 sodium ion per monomer.</text>
</comment>
<comment type="subunit">
    <text evidence="1">Homotetramer.</text>
</comment>
<comment type="similarity">
    <text evidence="1">Belongs to the glycosyl hydrolase 2 family.</text>
</comment>
<name>BGAL_ERWT9</name>
<protein>
    <recommendedName>
        <fullName evidence="1">Beta-galactosidase</fullName>
        <shortName evidence="1">Beta-gal</shortName>
        <ecNumber evidence="1">3.2.1.23</ecNumber>
    </recommendedName>
    <alternativeName>
        <fullName evidence="1">Lactase</fullName>
    </alternativeName>
</protein>
<feature type="chain" id="PRO_0000366987" description="Beta-galactosidase">
    <location>
        <begin position="1"/>
        <end position="1026"/>
    </location>
</feature>
<feature type="active site" description="Proton donor" evidence="1">
    <location>
        <position position="463"/>
    </location>
</feature>
<feature type="active site" description="Nucleophile" evidence="1">
    <location>
        <position position="539"/>
    </location>
</feature>
<feature type="binding site" evidence="1">
    <location>
        <position position="104"/>
    </location>
    <ligand>
        <name>substrate</name>
    </ligand>
</feature>
<feature type="binding site" evidence="1">
    <location>
        <position position="203"/>
    </location>
    <ligand>
        <name>Na(+)</name>
        <dbReference type="ChEBI" id="CHEBI:29101"/>
    </ligand>
</feature>
<feature type="binding site" evidence="1">
    <location>
        <position position="203"/>
    </location>
    <ligand>
        <name>substrate</name>
    </ligand>
</feature>
<feature type="binding site" evidence="1">
    <location>
        <position position="418"/>
    </location>
    <ligand>
        <name>Mg(2+)</name>
        <dbReference type="ChEBI" id="CHEBI:18420"/>
        <label>1</label>
    </ligand>
</feature>
<feature type="binding site" evidence="1">
    <location>
        <position position="420"/>
    </location>
    <ligand>
        <name>Mg(2+)</name>
        <dbReference type="ChEBI" id="CHEBI:18420"/>
        <label>1</label>
    </ligand>
</feature>
<feature type="binding site" evidence="1">
    <location>
        <position position="463"/>
    </location>
    <ligand>
        <name>Mg(2+)</name>
        <dbReference type="ChEBI" id="CHEBI:18420"/>
        <label>1</label>
    </ligand>
</feature>
<feature type="binding site" evidence="1">
    <location>
        <position position="463"/>
    </location>
    <ligand>
        <name>substrate</name>
    </ligand>
</feature>
<feature type="binding site" evidence="1">
    <location>
        <begin position="539"/>
        <end position="542"/>
    </location>
    <ligand>
        <name>substrate</name>
    </ligand>
</feature>
<feature type="binding site" evidence="1">
    <location>
        <position position="599"/>
    </location>
    <ligand>
        <name>Mg(2+)</name>
        <dbReference type="ChEBI" id="CHEBI:18420"/>
        <label>2</label>
    </ligand>
</feature>
<feature type="binding site" evidence="1">
    <location>
        <position position="603"/>
    </location>
    <ligand>
        <name>Na(+)</name>
        <dbReference type="ChEBI" id="CHEBI:29101"/>
    </ligand>
</feature>
<feature type="binding site" evidence="1">
    <location>
        <position position="606"/>
    </location>
    <ligand>
        <name>Na(+)</name>
        <dbReference type="ChEBI" id="CHEBI:29101"/>
    </ligand>
</feature>
<feature type="binding site" evidence="1">
    <location>
        <position position="606"/>
    </location>
    <ligand>
        <name>substrate</name>
    </ligand>
</feature>
<feature type="binding site" evidence="1">
    <location>
        <position position="1002"/>
    </location>
    <ligand>
        <name>substrate</name>
    </ligand>
</feature>
<feature type="site" description="Transition state stabilizer" evidence="1">
    <location>
        <position position="359"/>
    </location>
</feature>
<feature type="site" description="Transition state stabilizer" evidence="1">
    <location>
        <position position="393"/>
    </location>
</feature>
<organism>
    <name type="scientific">Erwinia tasmaniensis (strain DSM 17950 / CFBP 7177 / CIP 109463 / NCPPB 4357 / Et1/99)</name>
    <dbReference type="NCBI Taxonomy" id="465817"/>
    <lineage>
        <taxon>Bacteria</taxon>
        <taxon>Pseudomonadati</taxon>
        <taxon>Pseudomonadota</taxon>
        <taxon>Gammaproteobacteria</taxon>
        <taxon>Enterobacterales</taxon>
        <taxon>Erwiniaceae</taxon>
        <taxon>Erwinia</taxon>
    </lineage>
</organism>
<accession>B2VHN8</accession>
<keyword id="KW-0326">Glycosidase</keyword>
<keyword id="KW-0378">Hydrolase</keyword>
<keyword id="KW-0460">Magnesium</keyword>
<keyword id="KW-0479">Metal-binding</keyword>
<keyword id="KW-1185">Reference proteome</keyword>
<keyword id="KW-0915">Sodium</keyword>
<sequence>MAKTDPLTLQQLLAQRHWENPALTQLNRLPAHTPLASWRNADAARGDLASPSQRLLDGEWGFSYFDRPQAVPDAWINGDLPQVGRLSVPSNWQLSGYDAPIYTNVQYPIPTDPPRVPDDNPTGCYSLTFHCQPAWLQSGQTRIIFDGVNSAFYLWCNGEFIGYSQDSRLPAEFDLSQRLLEGENRIAVMVLRWCDGSYLEDQDMWRMSGIFRSVSLLHKPHVRLDDIHIDTRLSPEYRSAQLRVLALCSLTDASAYQLKVTLWRDDTLIAQHQQPFGTPVVDERGRYLDRTRLSLQIDQPLLWNAETPHLYRAVIALLDADGTLIEAEACDVGFRQVEVSGGLLKLNGKALLIRGTNRHEHHPDRGQVMDEPAMIADILLMKQHNFNAVRCSHYPNHPLWYRLCDRYGLYVVDEANIETHGMQPMNRLADDPSWFSAFSERVTRMVQRDRNHACIIIWSLGNESGHGSTHDALYGWIKSDDPSRPVQYEGGGADTAASDIICPMYARVDRDQPFEAVPKWSIKKWIALPEETRPLILCEYAHAMGNSLGGFSRYWQAFRQYPPLQGGFVWDWADQNLTRQAADGSSWQAYGGDFGDMPNDRQFCMNGLVFADRSPHPALFEAKRAQQFFQFQLENTSPITLGITSEYLFRHSDNERLCWRIEHHGEQVAGGQITLNLPPEGTVSLMLGELPSLAGELWLRVEVIQPAATAWSPANHRVAWDGWQLPAALSLPKPDVPGEQPRLHPQSQLIEVVQAGQRWQFCRQSGELIQWLQADKPQLLSPLRDLFVRAPLDNDIGISEANRIDPHAWAERWQRAGYYRLESQLLRLQTDILNDGVQIRSEQAWLADGEPRFLSRKCYRINRQGEMLLEVEVDIAAGLPEPARIGLHCQLAEVAEEVCWLGLGPHENYPDRRLAAEFSRWQLPLGALSTPYVFPCENGLRGGTRELTFGHWHIRGDFHFSLSRHSVEQLRKTSHRHLLRDEAGCWLTLDGFHMGVGGDDSWSPSVDEEFLLRARQYRYRLILTRG</sequence>
<gene>
    <name evidence="1" type="primary">lacZ</name>
    <name type="ordered locus">ETA_25680</name>
</gene>
<dbReference type="EC" id="3.2.1.23" evidence="1"/>
<dbReference type="EMBL" id="CU468135">
    <property type="protein sequence ID" value="CAO97614.1"/>
    <property type="molecule type" value="Genomic_DNA"/>
</dbReference>
<dbReference type="RefSeq" id="WP_012442279.1">
    <property type="nucleotide sequence ID" value="NC_010694.1"/>
</dbReference>
<dbReference type="SMR" id="B2VHN8"/>
<dbReference type="STRING" id="465817.ETA_25680"/>
<dbReference type="CAZy" id="GH2">
    <property type="family name" value="Glycoside Hydrolase Family 2"/>
</dbReference>
<dbReference type="KEGG" id="eta:ETA_25680"/>
<dbReference type="eggNOG" id="COG3250">
    <property type="taxonomic scope" value="Bacteria"/>
</dbReference>
<dbReference type="HOGENOM" id="CLU_002346_1_1_6"/>
<dbReference type="OrthoDB" id="9758603at2"/>
<dbReference type="Proteomes" id="UP000001726">
    <property type="component" value="Chromosome"/>
</dbReference>
<dbReference type="GO" id="GO:0009341">
    <property type="term" value="C:beta-galactosidase complex"/>
    <property type="evidence" value="ECO:0007669"/>
    <property type="project" value="InterPro"/>
</dbReference>
<dbReference type="GO" id="GO:0004565">
    <property type="term" value="F:beta-galactosidase activity"/>
    <property type="evidence" value="ECO:0007669"/>
    <property type="project" value="UniProtKB-EC"/>
</dbReference>
<dbReference type="GO" id="GO:0030246">
    <property type="term" value="F:carbohydrate binding"/>
    <property type="evidence" value="ECO:0007669"/>
    <property type="project" value="InterPro"/>
</dbReference>
<dbReference type="GO" id="GO:0000287">
    <property type="term" value="F:magnesium ion binding"/>
    <property type="evidence" value="ECO:0007669"/>
    <property type="project" value="UniProtKB-UniRule"/>
</dbReference>
<dbReference type="GO" id="GO:0005990">
    <property type="term" value="P:lactose catabolic process"/>
    <property type="evidence" value="ECO:0007669"/>
    <property type="project" value="TreeGrafter"/>
</dbReference>
<dbReference type="FunFam" id="2.60.40.10:FF:000680">
    <property type="entry name" value="Beta-galactosidase"/>
    <property type="match status" value="1"/>
</dbReference>
<dbReference type="FunFam" id="3.20.20.80:FF:000018">
    <property type="entry name" value="Beta-galactosidase"/>
    <property type="match status" value="1"/>
</dbReference>
<dbReference type="Gene3D" id="2.70.98.10">
    <property type="match status" value="1"/>
</dbReference>
<dbReference type="Gene3D" id="2.60.120.260">
    <property type="entry name" value="Galactose-binding domain-like"/>
    <property type="match status" value="1"/>
</dbReference>
<dbReference type="Gene3D" id="3.20.20.80">
    <property type="entry name" value="Glycosidases"/>
    <property type="match status" value="1"/>
</dbReference>
<dbReference type="Gene3D" id="2.60.40.10">
    <property type="entry name" value="Immunoglobulins"/>
    <property type="match status" value="2"/>
</dbReference>
<dbReference type="HAMAP" id="MF_01687">
    <property type="entry name" value="Beta_gal"/>
    <property type="match status" value="1"/>
</dbReference>
<dbReference type="InterPro" id="IPR004199">
    <property type="entry name" value="B-gal_small/dom_5"/>
</dbReference>
<dbReference type="InterPro" id="IPR050347">
    <property type="entry name" value="Bact_Beta-galactosidase"/>
</dbReference>
<dbReference type="InterPro" id="IPR036156">
    <property type="entry name" value="Beta-gal/glucu_dom_sf"/>
</dbReference>
<dbReference type="InterPro" id="IPR011013">
    <property type="entry name" value="Gal_mutarotase_sf_dom"/>
</dbReference>
<dbReference type="InterPro" id="IPR008979">
    <property type="entry name" value="Galactose-bd-like_sf"/>
</dbReference>
<dbReference type="InterPro" id="IPR014718">
    <property type="entry name" value="GH-type_carb-bd"/>
</dbReference>
<dbReference type="InterPro" id="IPR006101">
    <property type="entry name" value="Glyco_hydro_2"/>
</dbReference>
<dbReference type="InterPro" id="IPR023232">
    <property type="entry name" value="Glyco_hydro_2_AS"/>
</dbReference>
<dbReference type="InterPro" id="IPR023933">
    <property type="entry name" value="Glyco_hydro_2_beta_Galsidase"/>
</dbReference>
<dbReference type="InterPro" id="IPR006103">
    <property type="entry name" value="Glyco_hydro_2_cat"/>
</dbReference>
<dbReference type="InterPro" id="IPR023230">
    <property type="entry name" value="Glyco_hydro_2_CS"/>
</dbReference>
<dbReference type="InterPro" id="IPR006102">
    <property type="entry name" value="Glyco_hydro_2_Ig-like"/>
</dbReference>
<dbReference type="InterPro" id="IPR006104">
    <property type="entry name" value="Glyco_hydro_2_N"/>
</dbReference>
<dbReference type="InterPro" id="IPR017853">
    <property type="entry name" value="Glycoside_hydrolase_SF"/>
</dbReference>
<dbReference type="InterPro" id="IPR013783">
    <property type="entry name" value="Ig-like_fold"/>
</dbReference>
<dbReference type="InterPro" id="IPR032312">
    <property type="entry name" value="LacZ_4"/>
</dbReference>
<dbReference type="NCBIfam" id="NF007074">
    <property type="entry name" value="PRK09525.1"/>
    <property type="match status" value="1"/>
</dbReference>
<dbReference type="PANTHER" id="PTHR46323">
    <property type="entry name" value="BETA-GALACTOSIDASE"/>
    <property type="match status" value="1"/>
</dbReference>
<dbReference type="PANTHER" id="PTHR46323:SF2">
    <property type="entry name" value="BETA-GALACTOSIDASE"/>
    <property type="match status" value="1"/>
</dbReference>
<dbReference type="Pfam" id="PF02929">
    <property type="entry name" value="Bgal_small_N"/>
    <property type="match status" value="1"/>
</dbReference>
<dbReference type="Pfam" id="PF00703">
    <property type="entry name" value="Glyco_hydro_2"/>
    <property type="match status" value="1"/>
</dbReference>
<dbReference type="Pfam" id="PF02836">
    <property type="entry name" value="Glyco_hydro_2_C"/>
    <property type="match status" value="1"/>
</dbReference>
<dbReference type="Pfam" id="PF02837">
    <property type="entry name" value="Glyco_hydro_2_N"/>
    <property type="match status" value="1"/>
</dbReference>
<dbReference type="Pfam" id="PF16353">
    <property type="entry name" value="LacZ_4"/>
    <property type="match status" value="1"/>
</dbReference>
<dbReference type="PRINTS" id="PR00132">
    <property type="entry name" value="GLHYDRLASE2"/>
</dbReference>
<dbReference type="SMART" id="SM01038">
    <property type="entry name" value="Bgal_small_N"/>
    <property type="match status" value="1"/>
</dbReference>
<dbReference type="SUPFAM" id="SSF51445">
    <property type="entry name" value="(Trans)glycosidases"/>
    <property type="match status" value="1"/>
</dbReference>
<dbReference type="SUPFAM" id="SSF49303">
    <property type="entry name" value="beta-Galactosidase/glucuronidase domain"/>
    <property type="match status" value="2"/>
</dbReference>
<dbReference type="SUPFAM" id="SSF74650">
    <property type="entry name" value="Galactose mutarotase-like"/>
    <property type="match status" value="1"/>
</dbReference>
<dbReference type="SUPFAM" id="SSF49785">
    <property type="entry name" value="Galactose-binding domain-like"/>
    <property type="match status" value="1"/>
</dbReference>
<dbReference type="PROSITE" id="PS00719">
    <property type="entry name" value="GLYCOSYL_HYDROL_F2_1"/>
    <property type="match status" value="1"/>
</dbReference>
<dbReference type="PROSITE" id="PS00608">
    <property type="entry name" value="GLYCOSYL_HYDROL_F2_2"/>
    <property type="match status" value="1"/>
</dbReference>